<dbReference type="EMBL" id="AL591688">
    <property type="protein sequence ID" value="CAC47317.1"/>
    <property type="molecule type" value="Genomic_DNA"/>
</dbReference>
<dbReference type="RefSeq" id="NP_386844.1">
    <property type="nucleotide sequence ID" value="NC_003047.1"/>
</dbReference>
<dbReference type="RefSeq" id="WP_003527588.1">
    <property type="nucleotide sequence ID" value="NC_003047.1"/>
</dbReference>
<dbReference type="SMR" id="Q926C3"/>
<dbReference type="EnsemblBacteria" id="CAC47317">
    <property type="protein sequence ID" value="CAC47317"/>
    <property type="gene ID" value="SMc02942"/>
</dbReference>
<dbReference type="GeneID" id="89577153"/>
<dbReference type="KEGG" id="sme:SMc02942"/>
<dbReference type="PATRIC" id="fig|266834.11.peg.4246"/>
<dbReference type="eggNOG" id="COG2885">
    <property type="taxonomic scope" value="Bacteria"/>
</dbReference>
<dbReference type="HOGENOM" id="CLU_016890_9_2_5"/>
<dbReference type="OrthoDB" id="9809164at2"/>
<dbReference type="Proteomes" id="UP000001976">
    <property type="component" value="Chromosome"/>
</dbReference>
<dbReference type="GO" id="GO:0009279">
    <property type="term" value="C:cell outer membrane"/>
    <property type="evidence" value="ECO:0007669"/>
    <property type="project" value="UniProtKB-SubCell"/>
</dbReference>
<dbReference type="GO" id="GO:0051301">
    <property type="term" value="P:cell division"/>
    <property type="evidence" value="ECO:0007669"/>
    <property type="project" value="UniProtKB-UniRule"/>
</dbReference>
<dbReference type="CDD" id="cd07185">
    <property type="entry name" value="OmpA_C-like"/>
    <property type="match status" value="1"/>
</dbReference>
<dbReference type="Gene3D" id="3.30.1330.60">
    <property type="entry name" value="OmpA-like domain"/>
    <property type="match status" value="1"/>
</dbReference>
<dbReference type="HAMAP" id="MF_02204">
    <property type="entry name" value="Pal"/>
    <property type="match status" value="1"/>
</dbReference>
<dbReference type="InterPro" id="IPR050330">
    <property type="entry name" value="Bact_OuterMem_StrucFunc"/>
</dbReference>
<dbReference type="InterPro" id="IPR006664">
    <property type="entry name" value="OMP_bac"/>
</dbReference>
<dbReference type="InterPro" id="IPR006665">
    <property type="entry name" value="OmpA-like"/>
</dbReference>
<dbReference type="InterPro" id="IPR006690">
    <property type="entry name" value="OMPA-like_CS"/>
</dbReference>
<dbReference type="InterPro" id="IPR036737">
    <property type="entry name" value="OmpA-like_sf"/>
</dbReference>
<dbReference type="InterPro" id="IPR039001">
    <property type="entry name" value="Pal"/>
</dbReference>
<dbReference type="InterPro" id="IPR014169">
    <property type="entry name" value="Pal_lipo_C"/>
</dbReference>
<dbReference type="NCBIfam" id="TIGR02802">
    <property type="entry name" value="Pal_lipo"/>
    <property type="match status" value="1"/>
</dbReference>
<dbReference type="PANTHER" id="PTHR30329:SF21">
    <property type="entry name" value="LIPOPROTEIN YIAD-RELATED"/>
    <property type="match status" value="1"/>
</dbReference>
<dbReference type="PANTHER" id="PTHR30329">
    <property type="entry name" value="STATOR ELEMENT OF FLAGELLAR MOTOR COMPLEX"/>
    <property type="match status" value="1"/>
</dbReference>
<dbReference type="Pfam" id="PF00691">
    <property type="entry name" value="OmpA"/>
    <property type="match status" value="1"/>
</dbReference>
<dbReference type="PRINTS" id="PR01021">
    <property type="entry name" value="OMPADOMAIN"/>
</dbReference>
<dbReference type="SUPFAM" id="SSF103088">
    <property type="entry name" value="OmpA-like"/>
    <property type="match status" value="1"/>
</dbReference>
<dbReference type="PROSITE" id="PS01068">
    <property type="entry name" value="OMPA_1"/>
    <property type="match status" value="1"/>
</dbReference>
<dbReference type="PROSITE" id="PS51123">
    <property type="entry name" value="OMPA_2"/>
    <property type="match status" value="1"/>
</dbReference>
<dbReference type="PROSITE" id="PS51257">
    <property type="entry name" value="PROKAR_LIPOPROTEIN"/>
    <property type="match status" value="1"/>
</dbReference>
<reference key="1">
    <citation type="journal article" date="2001" name="Proc. Natl. Acad. Sci. U.S.A.">
        <title>Analysis of the chromosome sequence of the legume symbiont Sinorhizobium meliloti strain 1021.</title>
        <authorList>
            <person name="Capela D."/>
            <person name="Barloy-Hubler F."/>
            <person name="Gouzy J."/>
            <person name="Bothe G."/>
            <person name="Ampe F."/>
            <person name="Batut J."/>
            <person name="Boistard P."/>
            <person name="Becker A."/>
            <person name="Boutry M."/>
            <person name="Cadieu E."/>
            <person name="Dreano S."/>
            <person name="Gloux S."/>
            <person name="Godrie T."/>
            <person name="Goffeau A."/>
            <person name="Kahn D."/>
            <person name="Kiss E."/>
            <person name="Lelaure V."/>
            <person name="Masuy D."/>
            <person name="Pohl T."/>
            <person name="Portetelle D."/>
            <person name="Puehler A."/>
            <person name="Purnelle B."/>
            <person name="Ramsperger U."/>
            <person name="Renard C."/>
            <person name="Thebault P."/>
            <person name="Vandenbol M."/>
            <person name="Weidner S."/>
            <person name="Galibert F."/>
        </authorList>
    </citation>
    <scope>NUCLEOTIDE SEQUENCE [LARGE SCALE GENOMIC DNA]</scope>
    <source>
        <strain>1021</strain>
    </source>
</reference>
<reference key="2">
    <citation type="journal article" date="2001" name="Science">
        <title>The composite genome of the legume symbiont Sinorhizobium meliloti.</title>
        <authorList>
            <person name="Galibert F."/>
            <person name="Finan T.M."/>
            <person name="Long S.R."/>
            <person name="Puehler A."/>
            <person name="Abola P."/>
            <person name="Ampe F."/>
            <person name="Barloy-Hubler F."/>
            <person name="Barnett M.J."/>
            <person name="Becker A."/>
            <person name="Boistard P."/>
            <person name="Bothe G."/>
            <person name="Boutry M."/>
            <person name="Bowser L."/>
            <person name="Buhrmester J."/>
            <person name="Cadieu E."/>
            <person name="Capela D."/>
            <person name="Chain P."/>
            <person name="Cowie A."/>
            <person name="Davis R.W."/>
            <person name="Dreano S."/>
            <person name="Federspiel N.A."/>
            <person name="Fisher R.F."/>
            <person name="Gloux S."/>
            <person name="Godrie T."/>
            <person name="Goffeau A."/>
            <person name="Golding B."/>
            <person name="Gouzy J."/>
            <person name="Gurjal M."/>
            <person name="Hernandez-Lucas I."/>
            <person name="Hong A."/>
            <person name="Huizar L."/>
            <person name="Hyman R.W."/>
            <person name="Jones T."/>
            <person name="Kahn D."/>
            <person name="Kahn M.L."/>
            <person name="Kalman S."/>
            <person name="Keating D.H."/>
            <person name="Kiss E."/>
            <person name="Komp C."/>
            <person name="Lelaure V."/>
            <person name="Masuy D."/>
            <person name="Palm C."/>
            <person name="Peck M.C."/>
            <person name="Pohl T.M."/>
            <person name="Portetelle D."/>
            <person name="Purnelle B."/>
            <person name="Ramsperger U."/>
            <person name="Surzycki R."/>
            <person name="Thebault P."/>
            <person name="Vandenbol M."/>
            <person name="Vorhoelter F.J."/>
            <person name="Weidner S."/>
            <person name="Wells D.H."/>
            <person name="Wong K."/>
            <person name="Yeh K.-C."/>
            <person name="Batut J."/>
        </authorList>
    </citation>
    <scope>NUCLEOTIDE SEQUENCE [LARGE SCALE GENOMIC DNA]</scope>
    <source>
        <strain>1021</strain>
    </source>
</reference>
<organism>
    <name type="scientific">Rhizobium meliloti (strain 1021)</name>
    <name type="common">Ensifer meliloti</name>
    <name type="synonym">Sinorhizobium meliloti</name>
    <dbReference type="NCBI Taxonomy" id="266834"/>
    <lineage>
        <taxon>Bacteria</taxon>
        <taxon>Pseudomonadati</taxon>
        <taxon>Pseudomonadota</taxon>
        <taxon>Alphaproteobacteria</taxon>
        <taxon>Hyphomicrobiales</taxon>
        <taxon>Rhizobiaceae</taxon>
        <taxon>Sinorhizobium/Ensifer group</taxon>
        <taxon>Sinorhizobium</taxon>
    </lineage>
</organism>
<proteinExistence type="inferred from homology"/>
<keyword id="KW-0131">Cell cycle</keyword>
<keyword id="KW-0132">Cell division</keyword>
<keyword id="KW-0998">Cell outer membrane</keyword>
<keyword id="KW-0449">Lipoprotein</keyword>
<keyword id="KW-0472">Membrane</keyword>
<keyword id="KW-0564">Palmitate</keyword>
<keyword id="KW-1185">Reference proteome</keyword>
<keyword id="KW-0732">Signal</keyword>
<feature type="signal peptide" evidence="1">
    <location>
        <begin position="1"/>
        <end position="32"/>
    </location>
</feature>
<feature type="chain" id="PRO_0000020133" description="Peptidoglycan-associated lipoprotein" evidence="1">
    <location>
        <begin position="33"/>
        <end position="176"/>
    </location>
</feature>
<feature type="domain" description="OmpA-like" evidence="1">
    <location>
        <begin position="58"/>
        <end position="175"/>
    </location>
</feature>
<feature type="lipid moiety-binding region" description="N-palmitoyl cysteine" evidence="1">
    <location>
        <position position="33"/>
    </location>
</feature>
<feature type="lipid moiety-binding region" description="S-diacylglycerol cysteine" evidence="1">
    <location>
        <position position="33"/>
    </location>
</feature>
<evidence type="ECO:0000255" key="1">
    <source>
        <dbReference type="HAMAP-Rule" id="MF_02204"/>
    </source>
</evidence>
<protein>
    <recommendedName>
        <fullName evidence="1">Peptidoglycan-associated lipoprotein</fullName>
        <shortName evidence="1">PAL</shortName>
    </recommendedName>
    <alternativeName>
        <fullName>Outer membrane lipoprotein Omp16 homolog</fullName>
    </alternativeName>
</protein>
<comment type="function">
    <text evidence="1">Part of the Tol-Pal system, which plays a role in outer membrane invagination during cell division and is important for maintaining outer membrane integrity.</text>
</comment>
<comment type="subunit">
    <text evidence="1">The Tol-Pal system is composed of five core proteins: the inner membrane proteins TolA, TolQ and TolR, the periplasmic protein TolB and the outer membrane protein Pal. They form a network linking the inner and outer membranes and the peptidoglycan layer.</text>
</comment>
<comment type="subcellular location">
    <subcellularLocation>
        <location evidence="1">Cell outer membrane</location>
        <topology evidence="1">Lipid-anchor</topology>
    </subcellularLocation>
</comment>
<comment type="similarity">
    <text evidence="1">Belongs to the Pal lipoprotein family.</text>
</comment>
<gene>
    <name evidence="1" type="primary">pal</name>
    <name type="synonym">omp16</name>
    <name type="ordered locus">R02738</name>
    <name type="ORF">SMc02942</name>
</gene>
<sequence>MSRIDTPAASRMQTIARNPVMIALVMTLALAGCASKKNLPNDAAGLGLGAGAATPGSQQDFTVNVGDRIFFDTDSTSIRADAQATLDRQAQWLAKYPNYGITIEGHADERGTREYNLALGARRAAATRDYLVSRGVPGNRMRTISYGKEKPVAVCDDISCWSQNRRAVTVLGGAGS</sequence>
<name>PAL_RHIME</name>
<accession>Q926C3</accession>